<feature type="chain" id="PRO_0000326876" description="UPF0548 protein">
    <location>
        <begin position="1"/>
        <end position="216"/>
    </location>
</feature>
<proteinExistence type="inferred from homology"/>
<dbReference type="EMBL" id="AAFI02000006">
    <property type="protein sequence ID" value="EAL71561.1"/>
    <property type="molecule type" value="Genomic_DNA"/>
</dbReference>
<dbReference type="RefSeq" id="XP_645536.1">
    <property type="nucleotide sequence ID" value="XM_640444.1"/>
</dbReference>
<dbReference type="FunCoup" id="Q86JL6">
    <property type="interactions" value="1"/>
</dbReference>
<dbReference type="PaxDb" id="44689-DDB0305139"/>
<dbReference type="EnsemblProtists" id="EAL71561">
    <property type="protein sequence ID" value="EAL71561"/>
    <property type="gene ID" value="DDB_G0271742"/>
</dbReference>
<dbReference type="GeneID" id="8618165"/>
<dbReference type="KEGG" id="ddi:DDB_G0271742"/>
<dbReference type="dictyBase" id="DDB_G0271742"/>
<dbReference type="VEuPathDB" id="AmoebaDB:DDB_G0271742"/>
<dbReference type="eggNOG" id="ENOG502QTWG">
    <property type="taxonomic scope" value="Eukaryota"/>
</dbReference>
<dbReference type="HOGENOM" id="CLU_080841_0_1_1"/>
<dbReference type="InParanoid" id="Q86JL6"/>
<dbReference type="OMA" id="CVKEFFP"/>
<dbReference type="PhylomeDB" id="Q86JL6"/>
<dbReference type="PRO" id="PR:Q86JL6"/>
<dbReference type="Proteomes" id="UP000002195">
    <property type="component" value="Chromosome 2"/>
</dbReference>
<dbReference type="InterPro" id="IPR018960">
    <property type="entry name" value="DUF1990"/>
</dbReference>
<dbReference type="PANTHER" id="PTHR34202">
    <property type="entry name" value="UPF0548 PROTEIN"/>
    <property type="match status" value="1"/>
</dbReference>
<dbReference type="PANTHER" id="PTHR34202:SF1">
    <property type="entry name" value="UPF0548 PROTEIN"/>
    <property type="match status" value="1"/>
</dbReference>
<dbReference type="Pfam" id="PF09348">
    <property type="entry name" value="DUF1990"/>
    <property type="match status" value="1"/>
</dbReference>
<keyword id="KW-1185">Reference proteome</keyword>
<accession>Q86JL6</accession>
<accession>Q55AI6</accession>
<evidence type="ECO:0000305" key="1"/>
<organism>
    <name type="scientific">Dictyostelium discoideum</name>
    <name type="common">Social amoeba</name>
    <dbReference type="NCBI Taxonomy" id="44689"/>
    <lineage>
        <taxon>Eukaryota</taxon>
        <taxon>Amoebozoa</taxon>
        <taxon>Evosea</taxon>
        <taxon>Eumycetozoa</taxon>
        <taxon>Dictyostelia</taxon>
        <taxon>Dictyosteliales</taxon>
        <taxon>Dictyosteliaceae</taxon>
        <taxon>Dictyostelium</taxon>
    </lineage>
</organism>
<reference key="1">
    <citation type="journal article" date="2002" name="Nature">
        <title>Sequence and analysis of chromosome 2 of Dictyostelium discoideum.</title>
        <authorList>
            <person name="Gloeckner G."/>
            <person name="Eichinger L."/>
            <person name="Szafranski K."/>
            <person name="Pachebat J.A."/>
            <person name="Bankier A.T."/>
            <person name="Dear P.H."/>
            <person name="Lehmann R."/>
            <person name="Baumgart C."/>
            <person name="Parra G."/>
            <person name="Abril J.F."/>
            <person name="Guigo R."/>
            <person name="Kumpf K."/>
            <person name="Tunggal B."/>
            <person name="Cox E.C."/>
            <person name="Quail M.A."/>
            <person name="Platzer M."/>
            <person name="Rosenthal A."/>
            <person name="Noegel A.A."/>
        </authorList>
    </citation>
    <scope>NUCLEOTIDE SEQUENCE [LARGE SCALE GENOMIC DNA]</scope>
    <source>
        <strain>AX4</strain>
    </source>
</reference>
<reference key="2">
    <citation type="journal article" date="2005" name="Nature">
        <title>The genome of the social amoeba Dictyostelium discoideum.</title>
        <authorList>
            <person name="Eichinger L."/>
            <person name="Pachebat J.A."/>
            <person name="Gloeckner G."/>
            <person name="Rajandream M.A."/>
            <person name="Sucgang R."/>
            <person name="Berriman M."/>
            <person name="Song J."/>
            <person name="Olsen R."/>
            <person name="Szafranski K."/>
            <person name="Xu Q."/>
            <person name="Tunggal B."/>
            <person name="Kummerfeld S."/>
            <person name="Madera M."/>
            <person name="Konfortov B.A."/>
            <person name="Rivero F."/>
            <person name="Bankier A.T."/>
            <person name="Lehmann R."/>
            <person name="Hamlin N."/>
            <person name="Davies R."/>
            <person name="Gaudet P."/>
            <person name="Fey P."/>
            <person name="Pilcher K."/>
            <person name="Chen G."/>
            <person name="Saunders D."/>
            <person name="Sodergren E.J."/>
            <person name="Davis P."/>
            <person name="Kerhornou A."/>
            <person name="Nie X."/>
            <person name="Hall N."/>
            <person name="Anjard C."/>
            <person name="Hemphill L."/>
            <person name="Bason N."/>
            <person name="Farbrother P."/>
            <person name="Desany B."/>
            <person name="Just E."/>
            <person name="Morio T."/>
            <person name="Rost R."/>
            <person name="Churcher C.M."/>
            <person name="Cooper J."/>
            <person name="Haydock S."/>
            <person name="van Driessche N."/>
            <person name="Cronin A."/>
            <person name="Goodhead I."/>
            <person name="Muzny D.M."/>
            <person name="Mourier T."/>
            <person name="Pain A."/>
            <person name="Lu M."/>
            <person name="Harper D."/>
            <person name="Lindsay R."/>
            <person name="Hauser H."/>
            <person name="James K.D."/>
            <person name="Quiles M."/>
            <person name="Madan Babu M."/>
            <person name="Saito T."/>
            <person name="Buchrieser C."/>
            <person name="Wardroper A."/>
            <person name="Felder M."/>
            <person name="Thangavelu M."/>
            <person name="Johnson D."/>
            <person name="Knights A."/>
            <person name="Loulseged H."/>
            <person name="Mungall K.L."/>
            <person name="Oliver K."/>
            <person name="Price C."/>
            <person name="Quail M.A."/>
            <person name="Urushihara H."/>
            <person name="Hernandez J."/>
            <person name="Rabbinowitsch E."/>
            <person name="Steffen D."/>
            <person name="Sanders M."/>
            <person name="Ma J."/>
            <person name="Kohara Y."/>
            <person name="Sharp S."/>
            <person name="Simmonds M.N."/>
            <person name="Spiegler S."/>
            <person name="Tivey A."/>
            <person name="Sugano S."/>
            <person name="White B."/>
            <person name="Walker D."/>
            <person name="Woodward J.R."/>
            <person name="Winckler T."/>
            <person name="Tanaka Y."/>
            <person name="Shaulsky G."/>
            <person name="Schleicher M."/>
            <person name="Weinstock G.M."/>
            <person name="Rosenthal A."/>
            <person name="Cox E.C."/>
            <person name="Chisholm R.L."/>
            <person name="Gibbs R.A."/>
            <person name="Loomis W.F."/>
            <person name="Platzer M."/>
            <person name="Kay R.R."/>
            <person name="Williams J.G."/>
            <person name="Dear P.H."/>
            <person name="Noegel A.A."/>
            <person name="Barrell B.G."/>
            <person name="Kuspa A."/>
        </authorList>
    </citation>
    <scope>NUCLEOTIDE SEQUENCE [LARGE SCALE GENOMIC DNA]</scope>
    <source>
        <strain>AX4</strain>
    </source>
</reference>
<comment type="similarity">
    <text evidence="1">Belongs to the UPF0548 family.</text>
</comment>
<protein>
    <recommendedName>
        <fullName>UPF0548 protein</fullName>
    </recommendedName>
</protein>
<name>U548_DICDI</name>
<gene>
    <name type="ORF">DDB_G0271742</name>
</gene>
<sequence>MFCFRKPSDSDIKQYINDRREEQFAYSNLYGTQDYATKEEYEMDPKYSNFDVDQVKIQLGTGVECFQKAVAALKQWKHFDLDWVDFYFKNTPIAVGETVGILSKQVGFWILSFARINYLYDGDQEDGSIKFGYSYGTLKDHVEKGEERFVIEWVRDPDGAPDKGAVYYEMLSFSEPSYWLSQLGYPVTRYFQNKFVVDSCNQMLKAVGSNQNVRHV</sequence>